<keyword id="KW-0186">Copper</keyword>
<keyword id="KW-0249">Electron transport</keyword>
<keyword id="KW-0460">Magnesium</keyword>
<keyword id="KW-0472">Membrane</keyword>
<keyword id="KW-0479">Metal-binding</keyword>
<keyword id="KW-0496">Mitochondrion</keyword>
<keyword id="KW-0999">Mitochondrion inner membrane</keyword>
<keyword id="KW-0679">Respiratory chain</keyword>
<keyword id="KW-1278">Translocase</keyword>
<keyword id="KW-0812">Transmembrane</keyword>
<keyword id="KW-1133">Transmembrane helix</keyword>
<keyword id="KW-0813">Transport</keyword>
<geneLocation type="mitochondrion"/>
<sequence length="227" mass="25862">MAHPAQLGFQDAASPIMEELMYFHDHTLMIVFLISSLVLYIISLMLTTELTHTSTMDAQEVETVWTILPAVILILIALPSLRILYMMDEITTPSLTLKTMGHQWYWSYEYTDYESLCFDSYMTPPLELDPGELRLLEVDNRVVLPTEMSIRMLISSEDVLHSWTVPSLGVKTDAIPGRLNQATLMTSRPGIYYGQCSEICGANHSFMPIVLELVPLKHFEEWLLSTL</sequence>
<organism>
    <name type="scientific">Microcebus tavaratra</name>
    <name type="common">Northern rufous mouse lemur</name>
    <dbReference type="NCBI Taxonomy" id="143351"/>
    <lineage>
        <taxon>Eukaryota</taxon>
        <taxon>Metazoa</taxon>
        <taxon>Chordata</taxon>
        <taxon>Craniata</taxon>
        <taxon>Vertebrata</taxon>
        <taxon>Euteleostomi</taxon>
        <taxon>Mammalia</taxon>
        <taxon>Eutheria</taxon>
        <taxon>Euarchontoglires</taxon>
        <taxon>Primates</taxon>
        <taxon>Strepsirrhini</taxon>
        <taxon>Lemuriformes</taxon>
        <taxon>Cheirogaleidae</taxon>
        <taxon>Microcebus</taxon>
    </lineage>
</organism>
<feature type="chain" id="PRO_0000227753" description="Cytochrome c oxidase subunit 2">
    <location>
        <begin position="1"/>
        <end position="227"/>
    </location>
</feature>
<feature type="topological domain" description="Mitochondrial intermembrane" evidence="3">
    <location>
        <begin position="1"/>
        <end position="14"/>
    </location>
</feature>
<feature type="transmembrane region" description="Helical; Name=I" evidence="3">
    <location>
        <begin position="15"/>
        <end position="45"/>
    </location>
</feature>
<feature type="topological domain" description="Mitochondrial matrix" evidence="3">
    <location>
        <begin position="46"/>
        <end position="59"/>
    </location>
</feature>
<feature type="transmembrane region" description="Helical; Name=II" evidence="3">
    <location>
        <begin position="60"/>
        <end position="87"/>
    </location>
</feature>
<feature type="topological domain" description="Mitochondrial intermembrane" evidence="3">
    <location>
        <begin position="88"/>
        <end position="227"/>
    </location>
</feature>
<feature type="binding site" evidence="3">
    <location>
        <position position="161"/>
    </location>
    <ligand>
        <name>Cu cation</name>
        <dbReference type="ChEBI" id="CHEBI:23378"/>
        <label>A1</label>
    </ligand>
</feature>
<feature type="binding site" evidence="3">
    <location>
        <position position="196"/>
    </location>
    <ligand>
        <name>Cu cation</name>
        <dbReference type="ChEBI" id="CHEBI:23378"/>
        <label>A1</label>
    </ligand>
</feature>
<feature type="binding site" evidence="3">
    <location>
        <position position="196"/>
    </location>
    <ligand>
        <name>Cu cation</name>
        <dbReference type="ChEBI" id="CHEBI:23378"/>
        <label>A2</label>
    </ligand>
</feature>
<feature type="binding site" evidence="3">
    <location>
        <position position="198"/>
    </location>
    <ligand>
        <name>Cu cation</name>
        <dbReference type="ChEBI" id="CHEBI:23378"/>
        <label>A2</label>
    </ligand>
</feature>
<feature type="binding site" evidence="3">
    <location>
        <position position="198"/>
    </location>
    <ligand>
        <name>Mg(2+)</name>
        <dbReference type="ChEBI" id="CHEBI:18420"/>
        <note>ligand shared with MT-CO1</note>
    </ligand>
</feature>
<feature type="binding site" evidence="3">
    <location>
        <position position="200"/>
    </location>
    <ligand>
        <name>Cu cation</name>
        <dbReference type="ChEBI" id="CHEBI:23378"/>
        <label>A1</label>
    </ligand>
</feature>
<feature type="binding site" evidence="3">
    <location>
        <position position="200"/>
    </location>
    <ligand>
        <name>Cu cation</name>
        <dbReference type="ChEBI" id="CHEBI:23378"/>
        <label>A2</label>
    </ligand>
</feature>
<feature type="binding site" evidence="3">
    <location>
        <position position="204"/>
    </location>
    <ligand>
        <name>Cu cation</name>
        <dbReference type="ChEBI" id="CHEBI:23378"/>
        <label>A2</label>
    </ligand>
</feature>
<feature type="binding site" evidence="3">
    <location>
        <position position="207"/>
    </location>
    <ligand>
        <name>Cu cation</name>
        <dbReference type="ChEBI" id="CHEBI:23378"/>
        <label>A1</label>
    </ligand>
</feature>
<dbReference type="EC" id="7.1.1.9"/>
<dbReference type="EMBL" id="AF285497">
    <property type="protein sequence ID" value="AAG30642.1"/>
    <property type="molecule type" value="Genomic_DNA"/>
</dbReference>
<dbReference type="EMBL" id="AF285498">
    <property type="protein sequence ID" value="AAG30643.1"/>
    <property type="molecule type" value="Genomic_DNA"/>
</dbReference>
<dbReference type="SMR" id="Q7IKU8"/>
<dbReference type="GO" id="GO:0005743">
    <property type="term" value="C:mitochondrial inner membrane"/>
    <property type="evidence" value="ECO:0007669"/>
    <property type="project" value="UniProtKB-SubCell"/>
</dbReference>
<dbReference type="GO" id="GO:0045277">
    <property type="term" value="C:respiratory chain complex IV"/>
    <property type="evidence" value="ECO:0000250"/>
    <property type="project" value="UniProtKB"/>
</dbReference>
<dbReference type="GO" id="GO:0005507">
    <property type="term" value="F:copper ion binding"/>
    <property type="evidence" value="ECO:0007669"/>
    <property type="project" value="InterPro"/>
</dbReference>
<dbReference type="GO" id="GO:0004129">
    <property type="term" value="F:cytochrome-c oxidase activity"/>
    <property type="evidence" value="ECO:0007669"/>
    <property type="project" value="UniProtKB-EC"/>
</dbReference>
<dbReference type="GO" id="GO:0042773">
    <property type="term" value="P:ATP synthesis coupled electron transport"/>
    <property type="evidence" value="ECO:0007669"/>
    <property type="project" value="TreeGrafter"/>
</dbReference>
<dbReference type="CDD" id="cd13912">
    <property type="entry name" value="CcO_II_C"/>
    <property type="match status" value="1"/>
</dbReference>
<dbReference type="FunFam" id="1.10.287.90:FF:000001">
    <property type="entry name" value="Cytochrome c oxidase subunit 2"/>
    <property type="match status" value="1"/>
</dbReference>
<dbReference type="FunFam" id="2.60.40.420:FF:000001">
    <property type="entry name" value="Cytochrome c oxidase subunit 2"/>
    <property type="match status" value="1"/>
</dbReference>
<dbReference type="Gene3D" id="1.10.287.90">
    <property type="match status" value="1"/>
</dbReference>
<dbReference type="Gene3D" id="2.60.40.420">
    <property type="entry name" value="Cupredoxins - blue copper proteins"/>
    <property type="match status" value="1"/>
</dbReference>
<dbReference type="InterPro" id="IPR045187">
    <property type="entry name" value="CcO_II"/>
</dbReference>
<dbReference type="InterPro" id="IPR002429">
    <property type="entry name" value="CcO_II-like_C"/>
</dbReference>
<dbReference type="InterPro" id="IPR034210">
    <property type="entry name" value="CcO_II_C"/>
</dbReference>
<dbReference type="InterPro" id="IPR001505">
    <property type="entry name" value="Copper_CuA"/>
</dbReference>
<dbReference type="InterPro" id="IPR008972">
    <property type="entry name" value="Cupredoxin"/>
</dbReference>
<dbReference type="InterPro" id="IPR014222">
    <property type="entry name" value="Cyt_c_oxidase_su2"/>
</dbReference>
<dbReference type="InterPro" id="IPR011759">
    <property type="entry name" value="Cyt_c_oxidase_su2_TM_dom"/>
</dbReference>
<dbReference type="InterPro" id="IPR036257">
    <property type="entry name" value="Cyt_c_oxidase_su2_TM_sf"/>
</dbReference>
<dbReference type="NCBIfam" id="TIGR02866">
    <property type="entry name" value="CoxB"/>
    <property type="match status" value="1"/>
</dbReference>
<dbReference type="PANTHER" id="PTHR22888:SF9">
    <property type="entry name" value="CYTOCHROME C OXIDASE SUBUNIT 2"/>
    <property type="match status" value="1"/>
</dbReference>
<dbReference type="PANTHER" id="PTHR22888">
    <property type="entry name" value="CYTOCHROME C OXIDASE, SUBUNIT II"/>
    <property type="match status" value="1"/>
</dbReference>
<dbReference type="Pfam" id="PF00116">
    <property type="entry name" value="COX2"/>
    <property type="match status" value="1"/>
</dbReference>
<dbReference type="Pfam" id="PF02790">
    <property type="entry name" value="COX2_TM"/>
    <property type="match status" value="1"/>
</dbReference>
<dbReference type="PRINTS" id="PR01166">
    <property type="entry name" value="CYCOXIDASEII"/>
</dbReference>
<dbReference type="SUPFAM" id="SSF49503">
    <property type="entry name" value="Cupredoxins"/>
    <property type="match status" value="1"/>
</dbReference>
<dbReference type="SUPFAM" id="SSF81464">
    <property type="entry name" value="Cytochrome c oxidase subunit II-like, transmembrane region"/>
    <property type="match status" value="1"/>
</dbReference>
<dbReference type="PROSITE" id="PS00078">
    <property type="entry name" value="COX2"/>
    <property type="match status" value="1"/>
</dbReference>
<dbReference type="PROSITE" id="PS50857">
    <property type="entry name" value="COX2_CUA"/>
    <property type="match status" value="1"/>
</dbReference>
<dbReference type="PROSITE" id="PS50999">
    <property type="entry name" value="COX2_TM"/>
    <property type="match status" value="1"/>
</dbReference>
<gene>
    <name type="primary">MT-CO2</name>
    <name type="synonym">COII</name>
    <name type="synonym">COX2</name>
    <name type="synonym">COXII</name>
    <name type="synonym">MTCO2</name>
</gene>
<protein>
    <recommendedName>
        <fullName>Cytochrome c oxidase subunit 2</fullName>
        <ecNumber>7.1.1.9</ecNumber>
    </recommendedName>
    <alternativeName>
        <fullName>Cytochrome c oxidase polypeptide II</fullName>
    </alternativeName>
</protein>
<comment type="function">
    <text evidence="2">Component of the cytochrome c oxidase, the last enzyme in the mitochondrial electron transport chain which drives oxidative phosphorylation. The respiratory chain contains 3 multisubunit complexes succinate dehydrogenase (complex II, CII), ubiquinol-cytochrome c oxidoreductase (cytochrome b-c1 complex, complex III, CIII) and cytochrome c oxidase (complex IV, CIV), that cooperate to transfer electrons derived from NADH and succinate to molecular oxygen, creating an electrochemical gradient over the inner membrane that drives transmembrane transport and the ATP synthase. Cytochrome c oxidase is the component of the respiratory chain that catalyzes the reduction of oxygen to water. Electrons originating from reduced cytochrome c in the intermembrane space (IMS) are transferred via the dinuclear copper A center (CU(A)) of subunit 2 and heme A of subunit 1 to the active site in subunit 1, a binuclear center (BNC) formed by heme A3 and copper B (CU(B)). The BNC reduces molecular oxygen to 2 water molecules using 4 electrons from cytochrome c in the IMS and 4 protons from the mitochondrial matrix.</text>
</comment>
<comment type="catalytic activity">
    <reaction evidence="2">
        <text>4 Fe(II)-[cytochrome c] + O2 + 8 H(+)(in) = 4 Fe(III)-[cytochrome c] + 2 H2O + 4 H(+)(out)</text>
        <dbReference type="Rhea" id="RHEA:11436"/>
        <dbReference type="Rhea" id="RHEA-COMP:10350"/>
        <dbReference type="Rhea" id="RHEA-COMP:14399"/>
        <dbReference type="ChEBI" id="CHEBI:15377"/>
        <dbReference type="ChEBI" id="CHEBI:15378"/>
        <dbReference type="ChEBI" id="CHEBI:15379"/>
        <dbReference type="ChEBI" id="CHEBI:29033"/>
        <dbReference type="ChEBI" id="CHEBI:29034"/>
        <dbReference type="EC" id="7.1.1.9"/>
    </reaction>
    <physiologicalReaction direction="left-to-right" evidence="2">
        <dbReference type="Rhea" id="RHEA:11437"/>
    </physiologicalReaction>
</comment>
<comment type="cofactor">
    <cofactor evidence="3">
        <name>Cu cation</name>
        <dbReference type="ChEBI" id="CHEBI:23378"/>
    </cofactor>
    <text evidence="3">Binds a dinuclear copper A center per subunit.</text>
</comment>
<comment type="subunit">
    <text evidence="1 3">Component of the cytochrome c oxidase (complex IV, CIV), a multisubunit enzyme composed of 14 subunits. The complex is composed of a catalytic core of 3 subunits MT-CO1, MT-CO2 and MT-CO3, encoded in the mitochondrial DNA, and 11 supernumerary subunits COX4I, COX5A, COX5B, COX6A, COX6B, COX6C, COX7A, COX7B, COX7C, COX8 and NDUFA4, which are encoded in the nuclear genome. The complex exists as a monomer or a dimer and forms supercomplexes (SCs) in the inner mitochondrial membrane with NADH-ubiquinone oxidoreductase (complex I, CI) and ubiquinol-cytochrome c oxidoreductase (cytochrome b-c1 complex, complex III, CIII), resulting in different assemblies (supercomplex SCI(1)III(2)IV(1) and megacomplex MCI(2)III(2)IV(2)) (By similarity). Found in a complex with TMEM177, COA6, COX18, COX20, SCO1 and SCO2. Interacts with TMEM177 in a COX20-dependent manner. Interacts with COX20. Interacts with COX16 (By similarity).</text>
</comment>
<comment type="subcellular location">
    <subcellularLocation>
        <location evidence="3">Mitochondrion inner membrane</location>
        <topology evidence="3">Multi-pass membrane protein</topology>
    </subcellularLocation>
</comment>
<comment type="similarity">
    <text evidence="4">Belongs to the cytochrome c oxidase subunit 2 family.</text>
</comment>
<accession>Q7IKU8</accession>
<evidence type="ECO:0000250" key="1">
    <source>
        <dbReference type="UniProtKB" id="P00403"/>
    </source>
</evidence>
<evidence type="ECO:0000250" key="2">
    <source>
        <dbReference type="UniProtKB" id="P00410"/>
    </source>
</evidence>
<evidence type="ECO:0000250" key="3">
    <source>
        <dbReference type="UniProtKB" id="P68530"/>
    </source>
</evidence>
<evidence type="ECO:0000305" key="4"/>
<name>COX2_MICTV</name>
<reference key="1">
    <citation type="journal article" date="2000" name="Proc. Natl. Acad. Sci. U.S.A.">
        <title>Remarkable species diversity in Malagasy mouse lemurs (primates, Microcebus).</title>
        <authorList>
            <person name="Yoder A.D."/>
            <person name="Rasoloarison R.M."/>
            <person name="Goodman S.M."/>
            <person name="Irwin J.A."/>
            <person name="Atsalis S."/>
            <person name="Ravosa M.J."/>
            <person name="Ganzhorn J.U."/>
        </authorList>
    </citation>
    <scope>NUCLEOTIDE SEQUENCE [GENOMIC DNA]</scope>
    <source>
        <strain>Isolate RMR 43</strain>
        <strain>Isolate YLE110</strain>
    </source>
</reference>
<proteinExistence type="inferred from homology"/>